<name>DNLJ_SINFN</name>
<gene>
    <name evidence="1" type="primary">ligA</name>
    <name type="ordered locus">NGR_c20970</name>
</gene>
<feature type="chain" id="PRO_0000380453" description="DNA ligase">
    <location>
        <begin position="1"/>
        <end position="717"/>
    </location>
</feature>
<feature type="domain" description="BRCT" evidence="1">
    <location>
        <begin position="639"/>
        <end position="717"/>
    </location>
</feature>
<feature type="active site" description="N6-AMP-lysine intermediate" evidence="1">
    <location>
        <position position="129"/>
    </location>
</feature>
<feature type="binding site" evidence="1">
    <location>
        <begin position="44"/>
        <end position="48"/>
    </location>
    <ligand>
        <name>NAD(+)</name>
        <dbReference type="ChEBI" id="CHEBI:57540"/>
    </ligand>
</feature>
<feature type="binding site" evidence="1">
    <location>
        <begin position="93"/>
        <end position="94"/>
    </location>
    <ligand>
        <name>NAD(+)</name>
        <dbReference type="ChEBI" id="CHEBI:57540"/>
    </ligand>
</feature>
<feature type="binding site" evidence="1">
    <location>
        <position position="127"/>
    </location>
    <ligand>
        <name>NAD(+)</name>
        <dbReference type="ChEBI" id="CHEBI:57540"/>
    </ligand>
</feature>
<feature type="binding site" evidence="1">
    <location>
        <position position="150"/>
    </location>
    <ligand>
        <name>NAD(+)</name>
        <dbReference type="ChEBI" id="CHEBI:57540"/>
    </ligand>
</feature>
<feature type="binding site" evidence="1">
    <location>
        <position position="186"/>
    </location>
    <ligand>
        <name>NAD(+)</name>
        <dbReference type="ChEBI" id="CHEBI:57540"/>
    </ligand>
</feature>
<feature type="binding site" evidence="1">
    <location>
        <position position="302"/>
    </location>
    <ligand>
        <name>NAD(+)</name>
        <dbReference type="ChEBI" id="CHEBI:57540"/>
    </ligand>
</feature>
<feature type="binding site" evidence="1">
    <location>
        <position position="326"/>
    </location>
    <ligand>
        <name>NAD(+)</name>
        <dbReference type="ChEBI" id="CHEBI:57540"/>
    </ligand>
</feature>
<feature type="binding site" evidence="1">
    <location>
        <position position="431"/>
    </location>
    <ligand>
        <name>Zn(2+)</name>
        <dbReference type="ChEBI" id="CHEBI:29105"/>
    </ligand>
</feature>
<feature type="binding site" evidence="1">
    <location>
        <position position="434"/>
    </location>
    <ligand>
        <name>Zn(2+)</name>
        <dbReference type="ChEBI" id="CHEBI:29105"/>
    </ligand>
</feature>
<feature type="binding site" evidence="1">
    <location>
        <position position="455"/>
    </location>
    <ligand>
        <name>Zn(2+)</name>
        <dbReference type="ChEBI" id="CHEBI:29105"/>
    </ligand>
</feature>
<feature type="binding site" evidence="1">
    <location>
        <position position="461"/>
    </location>
    <ligand>
        <name>Zn(2+)</name>
        <dbReference type="ChEBI" id="CHEBI:29105"/>
    </ligand>
</feature>
<accession>C3MEL9</accession>
<dbReference type="EC" id="6.5.1.2" evidence="1"/>
<dbReference type="EMBL" id="CP001389">
    <property type="protein sequence ID" value="ACP25860.1"/>
    <property type="molecule type" value="Genomic_DNA"/>
</dbReference>
<dbReference type="RefSeq" id="WP_012708623.1">
    <property type="nucleotide sequence ID" value="NC_012587.1"/>
</dbReference>
<dbReference type="RefSeq" id="YP_002826613.1">
    <property type="nucleotide sequence ID" value="NC_012587.1"/>
</dbReference>
<dbReference type="SMR" id="C3MEL9"/>
<dbReference type="STRING" id="394.NGR_c20970"/>
<dbReference type="KEGG" id="rhi:NGR_c20970"/>
<dbReference type="PATRIC" id="fig|394.7.peg.4921"/>
<dbReference type="eggNOG" id="COG0272">
    <property type="taxonomic scope" value="Bacteria"/>
</dbReference>
<dbReference type="HOGENOM" id="CLU_007764_2_0_5"/>
<dbReference type="OrthoDB" id="9759736at2"/>
<dbReference type="Proteomes" id="UP000001054">
    <property type="component" value="Chromosome"/>
</dbReference>
<dbReference type="GO" id="GO:0005829">
    <property type="term" value="C:cytosol"/>
    <property type="evidence" value="ECO:0007669"/>
    <property type="project" value="TreeGrafter"/>
</dbReference>
<dbReference type="GO" id="GO:0003677">
    <property type="term" value="F:DNA binding"/>
    <property type="evidence" value="ECO:0007669"/>
    <property type="project" value="InterPro"/>
</dbReference>
<dbReference type="GO" id="GO:0003911">
    <property type="term" value="F:DNA ligase (NAD+) activity"/>
    <property type="evidence" value="ECO:0007669"/>
    <property type="project" value="UniProtKB-UniRule"/>
</dbReference>
<dbReference type="GO" id="GO:0046872">
    <property type="term" value="F:metal ion binding"/>
    <property type="evidence" value="ECO:0007669"/>
    <property type="project" value="UniProtKB-KW"/>
</dbReference>
<dbReference type="GO" id="GO:0006281">
    <property type="term" value="P:DNA repair"/>
    <property type="evidence" value="ECO:0007669"/>
    <property type="project" value="UniProtKB-KW"/>
</dbReference>
<dbReference type="GO" id="GO:0006260">
    <property type="term" value="P:DNA replication"/>
    <property type="evidence" value="ECO:0007669"/>
    <property type="project" value="UniProtKB-KW"/>
</dbReference>
<dbReference type="CDD" id="cd17748">
    <property type="entry name" value="BRCT_DNA_ligase_like"/>
    <property type="match status" value="1"/>
</dbReference>
<dbReference type="CDD" id="cd00114">
    <property type="entry name" value="LIGANc"/>
    <property type="match status" value="1"/>
</dbReference>
<dbReference type="FunFam" id="3.30.470.30:FF:000001">
    <property type="entry name" value="DNA ligase"/>
    <property type="match status" value="1"/>
</dbReference>
<dbReference type="Gene3D" id="6.20.10.30">
    <property type="match status" value="1"/>
</dbReference>
<dbReference type="Gene3D" id="1.10.150.20">
    <property type="entry name" value="5' to 3' exonuclease, C-terminal subdomain"/>
    <property type="match status" value="2"/>
</dbReference>
<dbReference type="Gene3D" id="3.40.50.10190">
    <property type="entry name" value="BRCT domain"/>
    <property type="match status" value="1"/>
</dbReference>
<dbReference type="Gene3D" id="3.30.470.30">
    <property type="entry name" value="DNA ligase/mRNA capping enzyme"/>
    <property type="match status" value="1"/>
</dbReference>
<dbReference type="Gene3D" id="1.10.287.610">
    <property type="entry name" value="Helix hairpin bin"/>
    <property type="match status" value="1"/>
</dbReference>
<dbReference type="Gene3D" id="2.40.50.140">
    <property type="entry name" value="Nucleic acid-binding proteins"/>
    <property type="match status" value="1"/>
</dbReference>
<dbReference type="HAMAP" id="MF_01588">
    <property type="entry name" value="DNA_ligase_A"/>
    <property type="match status" value="1"/>
</dbReference>
<dbReference type="InterPro" id="IPR001357">
    <property type="entry name" value="BRCT_dom"/>
</dbReference>
<dbReference type="InterPro" id="IPR036420">
    <property type="entry name" value="BRCT_dom_sf"/>
</dbReference>
<dbReference type="InterPro" id="IPR041663">
    <property type="entry name" value="DisA/LigA_HHH"/>
</dbReference>
<dbReference type="InterPro" id="IPR001679">
    <property type="entry name" value="DNA_ligase"/>
</dbReference>
<dbReference type="InterPro" id="IPR018239">
    <property type="entry name" value="DNA_ligase_AS"/>
</dbReference>
<dbReference type="InterPro" id="IPR033136">
    <property type="entry name" value="DNA_ligase_CS"/>
</dbReference>
<dbReference type="InterPro" id="IPR013839">
    <property type="entry name" value="DNAligase_adenylation"/>
</dbReference>
<dbReference type="InterPro" id="IPR013840">
    <property type="entry name" value="DNAligase_N"/>
</dbReference>
<dbReference type="InterPro" id="IPR003583">
    <property type="entry name" value="Hlx-hairpin-Hlx_DNA-bd_motif"/>
</dbReference>
<dbReference type="InterPro" id="IPR012340">
    <property type="entry name" value="NA-bd_OB-fold"/>
</dbReference>
<dbReference type="InterPro" id="IPR004150">
    <property type="entry name" value="NAD_DNA_ligase_OB"/>
</dbReference>
<dbReference type="InterPro" id="IPR010994">
    <property type="entry name" value="RuvA_2-like"/>
</dbReference>
<dbReference type="InterPro" id="IPR004149">
    <property type="entry name" value="Znf_DNAligase_C4"/>
</dbReference>
<dbReference type="NCBIfam" id="TIGR00575">
    <property type="entry name" value="dnlj"/>
    <property type="match status" value="1"/>
</dbReference>
<dbReference type="NCBIfam" id="NF005932">
    <property type="entry name" value="PRK07956.1"/>
    <property type="match status" value="1"/>
</dbReference>
<dbReference type="PANTHER" id="PTHR23389">
    <property type="entry name" value="CHROMOSOME TRANSMISSION FIDELITY FACTOR 18"/>
    <property type="match status" value="1"/>
</dbReference>
<dbReference type="PANTHER" id="PTHR23389:SF9">
    <property type="entry name" value="DNA LIGASE"/>
    <property type="match status" value="1"/>
</dbReference>
<dbReference type="Pfam" id="PF00533">
    <property type="entry name" value="BRCT"/>
    <property type="match status" value="1"/>
</dbReference>
<dbReference type="Pfam" id="PF01653">
    <property type="entry name" value="DNA_ligase_aden"/>
    <property type="match status" value="1"/>
</dbReference>
<dbReference type="Pfam" id="PF03120">
    <property type="entry name" value="DNA_ligase_OB"/>
    <property type="match status" value="1"/>
</dbReference>
<dbReference type="Pfam" id="PF03119">
    <property type="entry name" value="DNA_ligase_ZBD"/>
    <property type="match status" value="1"/>
</dbReference>
<dbReference type="Pfam" id="PF12826">
    <property type="entry name" value="HHH_2"/>
    <property type="match status" value="1"/>
</dbReference>
<dbReference type="PIRSF" id="PIRSF001604">
    <property type="entry name" value="LigA"/>
    <property type="match status" value="1"/>
</dbReference>
<dbReference type="SMART" id="SM00292">
    <property type="entry name" value="BRCT"/>
    <property type="match status" value="1"/>
</dbReference>
<dbReference type="SMART" id="SM00278">
    <property type="entry name" value="HhH1"/>
    <property type="match status" value="3"/>
</dbReference>
<dbReference type="SMART" id="SM00532">
    <property type="entry name" value="LIGANc"/>
    <property type="match status" value="1"/>
</dbReference>
<dbReference type="SUPFAM" id="SSF52113">
    <property type="entry name" value="BRCT domain"/>
    <property type="match status" value="1"/>
</dbReference>
<dbReference type="SUPFAM" id="SSF56091">
    <property type="entry name" value="DNA ligase/mRNA capping enzyme, catalytic domain"/>
    <property type="match status" value="1"/>
</dbReference>
<dbReference type="SUPFAM" id="SSF50249">
    <property type="entry name" value="Nucleic acid-binding proteins"/>
    <property type="match status" value="1"/>
</dbReference>
<dbReference type="SUPFAM" id="SSF47781">
    <property type="entry name" value="RuvA domain 2-like"/>
    <property type="match status" value="1"/>
</dbReference>
<dbReference type="PROSITE" id="PS50172">
    <property type="entry name" value="BRCT"/>
    <property type="match status" value="1"/>
</dbReference>
<dbReference type="PROSITE" id="PS01055">
    <property type="entry name" value="DNA_LIGASE_N1"/>
    <property type="match status" value="1"/>
</dbReference>
<dbReference type="PROSITE" id="PS01056">
    <property type="entry name" value="DNA_LIGASE_N2"/>
    <property type="match status" value="1"/>
</dbReference>
<organism>
    <name type="scientific">Sinorhizobium fredii (strain NBRC 101917 / NGR234)</name>
    <dbReference type="NCBI Taxonomy" id="394"/>
    <lineage>
        <taxon>Bacteria</taxon>
        <taxon>Pseudomonadati</taxon>
        <taxon>Pseudomonadota</taxon>
        <taxon>Alphaproteobacteria</taxon>
        <taxon>Hyphomicrobiales</taxon>
        <taxon>Rhizobiaceae</taxon>
        <taxon>Sinorhizobium/Ensifer group</taxon>
        <taxon>Sinorhizobium</taxon>
    </lineage>
</organism>
<protein>
    <recommendedName>
        <fullName evidence="1">DNA ligase</fullName>
        <ecNumber evidence="1">6.5.1.2</ecNumber>
    </recommendedName>
    <alternativeName>
        <fullName evidence="1">Polydeoxyribonucleotide synthase [NAD(+)]</fullName>
    </alternativeName>
</protein>
<keyword id="KW-0227">DNA damage</keyword>
<keyword id="KW-0234">DNA repair</keyword>
<keyword id="KW-0235">DNA replication</keyword>
<keyword id="KW-0436">Ligase</keyword>
<keyword id="KW-0460">Magnesium</keyword>
<keyword id="KW-0464">Manganese</keyword>
<keyword id="KW-0479">Metal-binding</keyword>
<keyword id="KW-0520">NAD</keyword>
<keyword id="KW-1185">Reference proteome</keyword>
<keyword id="KW-0862">Zinc</keyword>
<sequence>MLNEKKPVEQLTETEAAEELAFLVTELARHDALYHGQDAPEISDADYDALKRRNDLIEELFPALIREDSPSRKIGAAPSLTFQPVLHARPMLSLDNTFSDEDARDFVAGIYRFLGKLPDHSIAFTAEPKIDGLSMSLRYENRKLVTAATRGDGTTGENVTANIRTIRMIPQTLPADAPDVVEVRGEIYMAKSDFAALNAEMAAQGRPLYVNPRNTASGSLRQLDAKVTASRKLRFFAYAWGEISAMPSDTQFGMVETFKAWGFPVNPLMQRLSSADELLQHYHHIERERPDLDYDIDGVVYKVDRLDLQARLGFRSRSPRWATAHKFPAEQAFTRLKGIDIQVGRTGALTPVARLEPITVGGVVVTNATLHNEDYIRGIGNSGEPIREGRDIRIGDMVIVQRAGDVIPQIVDVVMDERAEGAEPYRFPTTCPVCGSHAVRDINEKTGKVDAVRRCTGGFVCRAQAIEHLKHFVSRHAFDIEGLGSKQIEFFFESEDPTLSIRTAPDIFTLERRQEASLTKLENIEGFGKVSVRKLYEAINARREIALHRFIYALGIRHVGETTAKLLARSYGTYEHFRAAMVDAGSLAGDAWNELNSIEGIGEVVARAIVEFYKEPRNLKVVSDLLEEVRPESAETRVSTDSPVAGKTVVFTGSLEKMTRDEAKAKAESLGAKVAGSVSKKTDIVVAGPGAGSKLDKARELGVQTMDEDEWLALIGG</sequence>
<comment type="function">
    <text evidence="1">DNA ligase that catalyzes the formation of phosphodiester linkages between 5'-phosphoryl and 3'-hydroxyl groups in double-stranded DNA using NAD as a coenzyme and as the energy source for the reaction. It is essential for DNA replication and repair of damaged DNA.</text>
</comment>
<comment type="catalytic activity">
    <reaction evidence="1">
        <text>NAD(+) + (deoxyribonucleotide)n-3'-hydroxyl + 5'-phospho-(deoxyribonucleotide)m = (deoxyribonucleotide)n+m + AMP + beta-nicotinamide D-nucleotide.</text>
        <dbReference type="EC" id="6.5.1.2"/>
    </reaction>
</comment>
<comment type="cofactor">
    <cofactor evidence="1">
        <name>Mg(2+)</name>
        <dbReference type="ChEBI" id="CHEBI:18420"/>
    </cofactor>
    <cofactor evidence="1">
        <name>Mn(2+)</name>
        <dbReference type="ChEBI" id="CHEBI:29035"/>
    </cofactor>
</comment>
<comment type="similarity">
    <text evidence="1">Belongs to the NAD-dependent DNA ligase family. LigA subfamily.</text>
</comment>
<proteinExistence type="inferred from homology"/>
<reference key="1">
    <citation type="journal article" date="2009" name="Appl. Environ. Microbiol.">
        <title>Rhizobium sp. strain NGR234 possesses a remarkable number of secretion systems.</title>
        <authorList>
            <person name="Schmeisser C."/>
            <person name="Liesegang H."/>
            <person name="Krysciak D."/>
            <person name="Bakkou N."/>
            <person name="Le Quere A."/>
            <person name="Wollherr A."/>
            <person name="Heinemeyer I."/>
            <person name="Morgenstern B."/>
            <person name="Pommerening-Roeser A."/>
            <person name="Flores M."/>
            <person name="Palacios R."/>
            <person name="Brenner S."/>
            <person name="Gottschalk G."/>
            <person name="Schmitz R.A."/>
            <person name="Broughton W.J."/>
            <person name="Perret X."/>
            <person name="Strittmatter A.W."/>
            <person name="Streit W.R."/>
        </authorList>
    </citation>
    <scope>NUCLEOTIDE SEQUENCE [LARGE SCALE GENOMIC DNA]</scope>
    <source>
        <strain>NBRC 101917 / NGR234</strain>
    </source>
</reference>
<evidence type="ECO:0000255" key="1">
    <source>
        <dbReference type="HAMAP-Rule" id="MF_01588"/>
    </source>
</evidence>